<organism>
    <name type="scientific">Shigella flexneri</name>
    <dbReference type="NCBI Taxonomy" id="623"/>
    <lineage>
        <taxon>Bacteria</taxon>
        <taxon>Pseudomonadati</taxon>
        <taxon>Pseudomonadota</taxon>
        <taxon>Gammaproteobacteria</taxon>
        <taxon>Enterobacterales</taxon>
        <taxon>Enterobacteriaceae</taxon>
        <taxon>Shigella</taxon>
    </lineage>
</organism>
<name>DLGD_SHIFL</name>
<comment type="function">
    <text evidence="1">Catalyzes the reduction of 2,3-diketo-L-gulonate in the presence of NADH, to form 3-keto-L-gulonate.</text>
</comment>
<comment type="catalytic activity">
    <reaction evidence="1">
        <text>3-dehydro-L-gulonate + NAD(+) = 2,3-dioxo-L-gulonate + NADH + H(+)</text>
        <dbReference type="Rhea" id="RHEA:21924"/>
        <dbReference type="ChEBI" id="CHEBI:15378"/>
        <dbReference type="ChEBI" id="CHEBI:57441"/>
        <dbReference type="ChEBI" id="CHEBI:57540"/>
        <dbReference type="ChEBI" id="CHEBI:57655"/>
        <dbReference type="ChEBI" id="CHEBI:57945"/>
        <dbReference type="EC" id="1.1.1.130"/>
    </reaction>
</comment>
<comment type="catalytic activity">
    <reaction evidence="1">
        <text>3-dehydro-L-gulonate + NADP(+) = 2,3-dioxo-L-gulonate + NADPH + H(+)</text>
        <dbReference type="Rhea" id="RHEA:21928"/>
        <dbReference type="ChEBI" id="CHEBI:15378"/>
        <dbReference type="ChEBI" id="CHEBI:57441"/>
        <dbReference type="ChEBI" id="CHEBI:57655"/>
        <dbReference type="ChEBI" id="CHEBI:57783"/>
        <dbReference type="ChEBI" id="CHEBI:58349"/>
        <dbReference type="EC" id="1.1.1.130"/>
    </reaction>
</comment>
<comment type="subunit">
    <text evidence="1">Homodimer.</text>
</comment>
<comment type="subcellular location">
    <subcellularLocation>
        <location evidence="1">Cytoplasm</location>
    </subcellularLocation>
</comment>
<comment type="similarity">
    <text evidence="1">Belongs to the LDH2/MDH2 oxidoreductase family. DlgD subfamily.</text>
</comment>
<sequence>MKVTFEQLKAAFNRVLISRGVDSETADACAEMFARTTESGVYSHGVNRFPRFIQQLENGDIIPDAQPKRITSLGAIEQWDAQRSIGNLTAKKMMDRAIELAADHGIGLVALRNANHWMRGGSYGWQAAEKGYIGICWTNSIAVMPPWGAKECRIGTNPLIVAIPSTPITMVDMSMSMFSYGMLEVNRLAGRQLPVDGGFDDEGNLTKEPGVIEKNRRILPMGYWKGSGMSIVLDMIATLLSDGASVAEVTQDNSDEYGISQIFIAIEVDKLIDGPTRDAKLQRIMDYVTTAERADENQAIRLPGHEFTTLLAENRRNGITVDDSVWAKIQAL</sequence>
<feature type="chain" id="PRO_0000083839" description="2,3-diketo-L-gulonate reductase">
    <location>
        <begin position="1"/>
        <end position="332"/>
    </location>
</feature>
<feature type="active site" description="Proton donor" evidence="1">
    <location>
        <position position="44"/>
    </location>
</feature>
<feature type="binding site" evidence="1">
    <location>
        <begin position="168"/>
        <end position="174"/>
    </location>
    <ligand>
        <name>NAD(+)</name>
        <dbReference type="ChEBI" id="CHEBI:57540"/>
    </ligand>
</feature>
<feature type="binding site" evidence="1">
    <location>
        <begin position="224"/>
        <end position="225"/>
    </location>
    <ligand>
        <name>NAD(+)</name>
        <dbReference type="ChEBI" id="CHEBI:57540"/>
    </ligand>
</feature>
<feature type="binding site" evidence="1">
    <location>
        <begin position="304"/>
        <end position="306"/>
    </location>
    <ligand>
        <name>NAD(+)</name>
        <dbReference type="ChEBI" id="CHEBI:57540"/>
    </ligand>
</feature>
<proteinExistence type="inferred from homology"/>
<evidence type="ECO:0000255" key="1">
    <source>
        <dbReference type="HAMAP-Rule" id="MF_00820"/>
    </source>
</evidence>
<dbReference type="EC" id="1.1.1.130" evidence="1"/>
<dbReference type="EMBL" id="AE005674">
    <property type="protein sequence ID" value="AAN45067.1"/>
    <property type="molecule type" value="Genomic_DNA"/>
</dbReference>
<dbReference type="EMBL" id="AE014073">
    <property type="protein sequence ID" value="AAP19122.1"/>
    <property type="molecule type" value="Genomic_DNA"/>
</dbReference>
<dbReference type="SMR" id="Q83PQ6"/>
<dbReference type="STRING" id="198214.SF3619"/>
<dbReference type="PaxDb" id="198214-SF3619"/>
<dbReference type="KEGG" id="sfl:SF3619"/>
<dbReference type="KEGG" id="sfx:S4150"/>
<dbReference type="PATRIC" id="fig|198214.7.peg.4272"/>
<dbReference type="HOGENOM" id="CLU_040452_4_0_6"/>
<dbReference type="Proteomes" id="UP000001006">
    <property type="component" value="Chromosome"/>
</dbReference>
<dbReference type="Proteomes" id="UP000002673">
    <property type="component" value="Chromosome"/>
</dbReference>
<dbReference type="GO" id="GO:0005737">
    <property type="term" value="C:cytoplasm"/>
    <property type="evidence" value="ECO:0007669"/>
    <property type="project" value="UniProtKB-SubCell"/>
</dbReference>
<dbReference type="GO" id="GO:0047559">
    <property type="term" value="F:3-dehydro-L-gulonate 2-dehydrogenase activity"/>
    <property type="evidence" value="ECO:0007669"/>
    <property type="project" value="UniProtKB-UniRule"/>
</dbReference>
<dbReference type="GO" id="GO:0070403">
    <property type="term" value="F:NAD+ binding"/>
    <property type="evidence" value="ECO:0007669"/>
    <property type="project" value="InterPro"/>
</dbReference>
<dbReference type="FunFam" id="1.10.1530.10:FF:000001">
    <property type="entry name" value="2,3-diketo-L-gulonate reductase"/>
    <property type="match status" value="1"/>
</dbReference>
<dbReference type="Gene3D" id="1.10.1530.10">
    <property type="match status" value="1"/>
</dbReference>
<dbReference type="Gene3D" id="3.30.1370.60">
    <property type="entry name" value="Hypothetical oxidoreductase yiak, domain 2"/>
    <property type="match status" value="1"/>
</dbReference>
<dbReference type="Gene3D" id="3.30.60.50">
    <property type="entry name" value="Hypothetical oxidoreductase yiak, domain 3"/>
    <property type="match status" value="1"/>
</dbReference>
<dbReference type="HAMAP" id="MF_00820">
    <property type="entry name" value="Diketo_gul_reduc"/>
    <property type="match status" value="1"/>
</dbReference>
<dbReference type="InterPro" id="IPR023689">
    <property type="entry name" value="Diketo_gul_Rdtase"/>
</dbReference>
<dbReference type="InterPro" id="IPR043144">
    <property type="entry name" value="Mal/L-sulf/L-lact_DH-like_ah"/>
</dbReference>
<dbReference type="InterPro" id="IPR043143">
    <property type="entry name" value="Mal/L-sulf/L-lact_DH-like_NADP"/>
</dbReference>
<dbReference type="InterPro" id="IPR036111">
    <property type="entry name" value="Mal/L-sulfo/L-lacto_DH-like_sf"/>
</dbReference>
<dbReference type="InterPro" id="IPR003767">
    <property type="entry name" value="Malate/L-lactate_DH-like"/>
</dbReference>
<dbReference type="NCBIfam" id="NF009750">
    <property type="entry name" value="PRK13260.1"/>
    <property type="match status" value="1"/>
</dbReference>
<dbReference type="PANTHER" id="PTHR11091:SF3">
    <property type="entry name" value="2,3-DIKETO-L-GULONATE REDUCTASE"/>
    <property type="match status" value="1"/>
</dbReference>
<dbReference type="PANTHER" id="PTHR11091">
    <property type="entry name" value="OXIDOREDUCTASE-RELATED"/>
    <property type="match status" value="1"/>
</dbReference>
<dbReference type="Pfam" id="PF02615">
    <property type="entry name" value="Ldh_2"/>
    <property type="match status" value="1"/>
</dbReference>
<dbReference type="SUPFAM" id="SSF89733">
    <property type="entry name" value="L-sulfolactate dehydrogenase-like"/>
    <property type="match status" value="1"/>
</dbReference>
<keyword id="KW-0963">Cytoplasm</keyword>
<keyword id="KW-0520">NAD</keyword>
<keyword id="KW-0560">Oxidoreductase</keyword>
<keyword id="KW-1185">Reference proteome</keyword>
<reference key="1">
    <citation type="journal article" date="2002" name="Nucleic Acids Res.">
        <title>Genome sequence of Shigella flexneri 2a: insights into pathogenicity through comparison with genomes of Escherichia coli K12 and O157.</title>
        <authorList>
            <person name="Jin Q."/>
            <person name="Yuan Z."/>
            <person name="Xu J."/>
            <person name="Wang Y."/>
            <person name="Shen Y."/>
            <person name="Lu W."/>
            <person name="Wang J."/>
            <person name="Liu H."/>
            <person name="Yang J."/>
            <person name="Yang F."/>
            <person name="Zhang X."/>
            <person name="Zhang J."/>
            <person name="Yang G."/>
            <person name="Wu H."/>
            <person name="Qu D."/>
            <person name="Dong J."/>
            <person name="Sun L."/>
            <person name="Xue Y."/>
            <person name="Zhao A."/>
            <person name="Gao Y."/>
            <person name="Zhu J."/>
            <person name="Kan B."/>
            <person name="Ding K."/>
            <person name="Chen S."/>
            <person name="Cheng H."/>
            <person name="Yao Z."/>
            <person name="He B."/>
            <person name="Chen R."/>
            <person name="Ma D."/>
            <person name="Qiang B."/>
            <person name="Wen Y."/>
            <person name="Hou Y."/>
            <person name="Yu J."/>
        </authorList>
    </citation>
    <scope>NUCLEOTIDE SEQUENCE [LARGE SCALE GENOMIC DNA]</scope>
    <source>
        <strain>301 / Serotype 2a</strain>
    </source>
</reference>
<reference key="2">
    <citation type="journal article" date="2003" name="Infect. Immun.">
        <title>Complete genome sequence and comparative genomics of Shigella flexneri serotype 2a strain 2457T.</title>
        <authorList>
            <person name="Wei J."/>
            <person name="Goldberg M.B."/>
            <person name="Burland V."/>
            <person name="Venkatesan M.M."/>
            <person name="Deng W."/>
            <person name="Fournier G."/>
            <person name="Mayhew G.F."/>
            <person name="Plunkett G. III"/>
            <person name="Rose D.J."/>
            <person name="Darling A."/>
            <person name="Mau B."/>
            <person name="Perna N.T."/>
            <person name="Payne S.M."/>
            <person name="Runyen-Janecky L.J."/>
            <person name="Zhou S."/>
            <person name="Schwartz D.C."/>
            <person name="Blattner F.R."/>
        </authorList>
    </citation>
    <scope>NUCLEOTIDE SEQUENCE [LARGE SCALE GENOMIC DNA]</scope>
    <source>
        <strain>ATCC 700930 / 2457T / Serotype 2a</strain>
    </source>
</reference>
<accession>Q83PQ6</accession>
<accession>Q7BZ08</accession>
<gene>
    <name evidence="1" type="primary">dlgD</name>
    <name type="ordered locus">SF3619</name>
    <name type="ordered locus">S4150</name>
</gene>
<protein>
    <recommendedName>
        <fullName evidence="1">2,3-diketo-L-gulonate reductase</fullName>
        <shortName evidence="1">2,3-DKG reductase</shortName>
        <ecNumber evidence="1">1.1.1.130</ecNumber>
    </recommendedName>
    <alternativeName>
        <fullName evidence="1">3-dehydro-L-gulonate 2-dehydrogenase</fullName>
    </alternativeName>
</protein>